<comment type="function">
    <text evidence="1">Toxin that acts as an agonist on melanocortin receptors (MC1R, MC3R, MC5R, MC5R). After binding to MC1R, the peptide activates the hMC1R/Gs pathway, but after binding to MC4R, it is not able to activate or antagonize the MC4R/Gs pathway. Inhibits melanocyte stimulating hormone (MSH)-binding to human receptors (Ki=1.8 uM to MC1R, Ki=19.8 uM to MC3R, Ki=7.1 uM to MC4R, Ki=10.0 uM to MC5R). This toxin is structurally unrelated to the natural agonists.</text>
</comment>
<comment type="subcellular location">
    <subcellularLocation>
        <location evidence="3">Secreted</location>
    </subcellularLocation>
</comment>
<comment type="tissue specificity">
    <text evidence="3">Expressed by the venom gland.</text>
</comment>
<comment type="domain">
    <text evidence="3">The presence of a 'disulfide through disulfide knot' structurally defines this protein as a knottin.</text>
</comment>
<comment type="miscellaneous">
    <text evidence="1">Negative results: does not show activity when tested at 100 uM on mammalian sodium channels (Nav1.1, Nav1.2, Nav1.3, Nav1.4, Nav1.5, Nav1.6, Nav1.7, and Nav1.8), potassium channels (Kv1.1, Kv1.2, Kv1.3, Kv1.4, Kv1.5, Kv1.6, Kv2.1, Kv3.1, Kv4.3, Kv7.1, Kv7.3, Kv10.1, Kv11.1(hERG), GIRK1), a calcium channel (Cav3.3), and nicotinic acetylcholine receceptors alpha1-beta-1-gamma-delta and nAChR alpha-7.</text>
</comment>
<comment type="miscellaneous">
    <text evidence="3">The letter 'N' in the name stands for the Greek letter 'nu' that has been chosen as the activity descriptor for melanocortin receptor modulators. Since it is impossible to search for Greek letters in databases, the UniProt policy is to write all Greek letters as their full names (i.e. alpha, beta, etc.).</text>
</comment>
<reference evidence="4" key="1">
    <citation type="journal article" date="2020" name="J. Med. Chem.">
        <title>A venomics approach coupled to high-throughput toxin production strategies identifies the first venom-derived melanocortin receptor agonists.</title>
        <authorList>
            <person name="Reynaud S."/>
            <person name="Ciolek J."/>
            <person name="Degueldre M."/>
            <person name="Saez N.J."/>
            <person name="Sequeira A.F."/>
            <person name="Duhoo Y."/>
            <person name="Bras J.L.A."/>
            <person name="Meudal H."/>
            <person name="Cabo Diez M."/>
            <person name="Fernandez Pedrosa V."/>
            <person name="Verdenaud M."/>
            <person name="Boeri J."/>
            <person name="Pereira Ramos O."/>
            <person name="Ducancel F."/>
            <person name="Vanden Driessche M."/>
            <person name="Fourmy R."/>
            <person name="Violette A."/>
            <person name="Upert G."/>
            <person name="Mourier G."/>
            <person name="Beck-Sickinger A.G."/>
            <person name="Morl K."/>
            <person name="Landon C."/>
            <person name="Fontes C.M.G.A."/>
            <person name="Minambres Herraiz R."/>
            <person name="Rodriguez de la Vega R.C."/>
            <person name="Peigneur S."/>
            <person name="Tytgat J."/>
            <person name="Quinton L."/>
            <person name="De Pauw E."/>
            <person name="Vincentelli R."/>
            <person name="Servent D."/>
            <person name="Gilles N."/>
        </authorList>
    </citation>
    <scope>NUCLEOTIDE SEQUENCE [MRNA]</scope>
    <scope>FUNCTION</scope>
    <scope>SYNTHESIS</scope>
    <scope>STRUCTURE BY NMR</scope>
    <scope>DISULFIDE BONDS</scope>
    <source>
        <tissue>Venom gland</tissue>
    </source>
</reference>
<proteinExistence type="evidence at protein level"/>
<evidence type="ECO:0000269" key="1">
    <source>
    </source>
</evidence>
<evidence type="ECO:0000303" key="2">
    <source>
    </source>
</evidence>
<evidence type="ECO:0000305" key="3">
    <source>
    </source>
</evidence>
<evidence type="ECO:0007744" key="4">
    <source>
        <dbReference type="PDB" id="6SAA"/>
    </source>
</evidence>
<name>TXN1A_POERG</name>
<accession>P0DUJ4</accession>
<organism>
    <name type="scientific">Poecilotheria regalis</name>
    <name type="common">Indian ornamental tree spider</name>
    <dbReference type="NCBI Taxonomy" id="1203470"/>
    <lineage>
        <taxon>Eukaryota</taxon>
        <taxon>Metazoa</taxon>
        <taxon>Ecdysozoa</taxon>
        <taxon>Arthropoda</taxon>
        <taxon>Chelicerata</taxon>
        <taxon>Arachnida</taxon>
        <taxon>Araneae</taxon>
        <taxon>Mygalomorphae</taxon>
        <taxon>Theraphosidae</taxon>
        <taxon>Poecilotheria</taxon>
    </lineage>
</organism>
<protein>
    <recommendedName>
        <fullName evidence="2">NU-theraphotoxin-Preg1a</fullName>
        <shortName evidence="2">N-TRTX-Preg1a</shortName>
        <shortName evidence="2">NU-TRTX-Preg1a</shortName>
    </recommendedName>
</protein>
<feature type="peptide" id="PRO_0000452480" description="NU-theraphotoxin-Preg1a" evidence="1">
    <location>
        <begin position="1"/>
        <end position="28"/>
    </location>
</feature>
<feature type="disulfide bond" evidence="1 4">
    <location>
        <begin position="2"/>
        <end position="19"/>
    </location>
</feature>
<feature type="disulfide bond" evidence="1 4">
    <location>
        <begin position="9"/>
        <end position="22"/>
    </location>
</feature>
<feature type="disulfide bond" evidence="1 4">
    <location>
        <begin position="18"/>
        <end position="27"/>
    </location>
</feature>
<dbReference type="PDB" id="6SAA">
    <property type="method" value="NMR"/>
    <property type="chains" value="A=1-28"/>
</dbReference>
<dbReference type="PDBsum" id="6SAA"/>
<dbReference type="SMR" id="P0DUJ4"/>
<dbReference type="GO" id="GO:0005576">
    <property type="term" value="C:extracellular region"/>
    <property type="evidence" value="ECO:0007669"/>
    <property type="project" value="UniProtKB-SubCell"/>
</dbReference>
<dbReference type="GO" id="GO:0090729">
    <property type="term" value="F:toxin activity"/>
    <property type="evidence" value="ECO:0007669"/>
    <property type="project" value="UniProtKB-KW"/>
</dbReference>
<dbReference type="SUPFAM" id="SSF57059">
    <property type="entry name" value="omega toxin-like"/>
    <property type="match status" value="1"/>
</dbReference>
<keyword id="KW-0002">3D-structure</keyword>
<keyword id="KW-1015">Disulfide bond</keyword>
<keyword id="KW-1213">G-protein coupled receptor impairing toxin</keyword>
<keyword id="KW-0960">Knottin</keyword>
<keyword id="KW-0964">Secreted</keyword>
<keyword id="KW-0800">Toxin</keyword>
<sequence length="28" mass="2922">RCLHAGAACSGPIQKIPCCGTCSRRKCT</sequence>